<protein>
    <recommendedName>
        <fullName evidence="7">Acetate permease A</fullName>
    </recommendedName>
    <alternativeName>
        <fullName evidence="7">Monocarboxylate transporter acpA</fullName>
    </alternativeName>
</protein>
<reference key="1">
    <citation type="journal article" date="2005" name="Nature">
        <title>Sequencing of Aspergillus nidulans and comparative analysis with A. fumigatus and A. oryzae.</title>
        <authorList>
            <person name="Galagan J.E."/>
            <person name="Calvo S.E."/>
            <person name="Cuomo C."/>
            <person name="Ma L.-J."/>
            <person name="Wortman J.R."/>
            <person name="Batzoglou S."/>
            <person name="Lee S.-I."/>
            <person name="Bastuerkmen M."/>
            <person name="Spevak C.C."/>
            <person name="Clutterbuck J."/>
            <person name="Kapitonov V."/>
            <person name="Jurka J."/>
            <person name="Scazzocchio C."/>
            <person name="Farman M.L."/>
            <person name="Butler J."/>
            <person name="Purcell S."/>
            <person name="Harris S."/>
            <person name="Braus G.H."/>
            <person name="Draht O."/>
            <person name="Busch S."/>
            <person name="D'Enfert C."/>
            <person name="Bouchier C."/>
            <person name="Goldman G.H."/>
            <person name="Bell-Pedersen D."/>
            <person name="Griffiths-Jones S."/>
            <person name="Doonan J.H."/>
            <person name="Yu J."/>
            <person name="Vienken K."/>
            <person name="Pain A."/>
            <person name="Freitag M."/>
            <person name="Selker E.U."/>
            <person name="Archer D.B."/>
            <person name="Penalva M.A."/>
            <person name="Oakley B.R."/>
            <person name="Momany M."/>
            <person name="Tanaka T."/>
            <person name="Kumagai T."/>
            <person name="Asai K."/>
            <person name="Machida M."/>
            <person name="Nierman W.C."/>
            <person name="Denning D.W."/>
            <person name="Caddick M.X."/>
            <person name="Hynes M."/>
            <person name="Paoletti M."/>
            <person name="Fischer R."/>
            <person name="Miller B.L."/>
            <person name="Dyer P.S."/>
            <person name="Sachs M.S."/>
            <person name="Osmani S.A."/>
            <person name="Birren B.W."/>
        </authorList>
    </citation>
    <scope>NUCLEOTIDE SEQUENCE [LARGE SCALE GENOMIC DNA]</scope>
    <source>
        <strain>FGSC A4 / ATCC 38163 / CBS 112.46 / NRRL 194 / M139</strain>
    </source>
</reference>
<reference key="2">
    <citation type="journal article" date="2009" name="Fungal Genet. Biol.">
        <title>The 2008 update of the Aspergillus nidulans genome annotation: a community effort.</title>
        <authorList>
            <person name="Wortman J.R."/>
            <person name="Gilsenan J.M."/>
            <person name="Joardar V."/>
            <person name="Deegan J."/>
            <person name="Clutterbuck J."/>
            <person name="Andersen M.R."/>
            <person name="Archer D."/>
            <person name="Bencina M."/>
            <person name="Braus G."/>
            <person name="Coutinho P."/>
            <person name="von Dohren H."/>
            <person name="Doonan J."/>
            <person name="Driessen A.J."/>
            <person name="Durek P."/>
            <person name="Espeso E."/>
            <person name="Fekete E."/>
            <person name="Flipphi M."/>
            <person name="Estrada C.G."/>
            <person name="Geysens S."/>
            <person name="Goldman G."/>
            <person name="de Groot P.W."/>
            <person name="Hansen K."/>
            <person name="Harris S.D."/>
            <person name="Heinekamp T."/>
            <person name="Helmstaedt K."/>
            <person name="Henrissat B."/>
            <person name="Hofmann G."/>
            <person name="Homan T."/>
            <person name="Horio T."/>
            <person name="Horiuchi H."/>
            <person name="James S."/>
            <person name="Jones M."/>
            <person name="Karaffa L."/>
            <person name="Karanyi Z."/>
            <person name="Kato M."/>
            <person name="Keller N."/>
            <person name="Kelly D.E."/>
            <person name="Kiel J.A."/>
            <person name="Kim J.M."/>
            <person name="van der Klei I.J."/>
            <person name="Klis F.M."/>
            <person name="Kovalchuk A."/>
            <person name="Krasevec N."/>
            <person name="Kubicek C.P."/>
            <person name="Liu B."/>
            <person name="Maccabe A."/>
            <person name="Meyer V."/>
            <person name="Mirabito P."/>
            <person name="Miskei M."/>
            <person name="Mos M."/>
            <person name="Mullins J."/>
            <person name="Nelson D.R."/>
            <person name="Nielsen J."/>
            <person name="Oakley B.R."/>
            <person name="Osmani S.A."/>
            <person name="Pakula T."/>
            <person name="Paszewski A."/>
            <person name="Paulsen I."/>
            <person name="Pilsyk S."/>
            <person name="Pocsi I."/>
            <person name="Punt P.J."/>
            <person name="Ram A.F."/>
            <person name="Ren Q."/>
            <person name="Robellet X."/>
            <person name="Robson G."/>
            <person name="Seiboth B."/>
            <person name="van Solingen P."/>
            <person name="Specht T."/>
            <person name="Sun J."/>
            <person name="Taheri-Talesh N."/>
            <person name="Takeshita N."/>
            <person name="Ussery D."/>
            <person name="vanKuyk P.A."/>
            <person name="Visser H."/>
            <person name="van de Vondervoort P.J."/>
            <person name="de Vries R.P."/>
            <person name="Walton J."/>
            <person name="Xiang X."/>
            <person name="Xiong Y."/>
            <person name="Zeng A.P."/>
            <person name="Brandt B.W."/>
            <person name="Cornell M.J."/>
            <person name="van den Hondel C.A."/>
            <person name="Visser J."/>
            <person name="Oliver S.G."/>
            <person name="Turner G."/>
        </authorList>
    </citation>
    <scope>GENOME REANNOTATION</scope>
    <source>
        <strain>FGSC A4 / ATCC 38163 / CBS 112.46 / NRRL 194 / M139</strain>
    </source>
</reference>
<reference key="3">
    <citation type="journal article" date="2006" name="Fungal Genet. Biol.">
        <title>Functional analysis of alcS, a gene of the alc cluster in Aspergillus nidulans.</title>
        <authorList>
            <person name="Flipphi M."/>
            <person name="Robellet X."/>
            <person name="Dequier E."/>
            <person name="Leschelle X."/>
            <person name="Felenbok B."/>
            <person name="Velot C."/>
        </authorList>
    </citation>
    <scope>INDUCTION</scope>
</reference>
<reference key="4">
    <citation type="journal article" date="2008" name="Biochem. J.">
        <title>AcpA, a member of the GPR1/FUN34/YaaH membrane protein family, is essential for acetate permease activity in the hyphal fungus Aspergillus nidulans.</title>
        <authorList>
            <person name="Robellet X."/>
            <person name="Flipphi M."/>
            <person name="Pegot S."/>
            <person name="Maccabe A.P."/>
            <person name="Velot C."/>
        </authorList>
    </citation>
    <scope>DISRUPTION PHENOTYPE</scope>
    <scope>FUNCTION</scope>
    <scope>INDUCTION</scope>
</reference>
<sequence>MSAEQNHGLEKDVGGPAAPAAAAPNAPAAAPGAPPAGMSAEEHRSRFGYGPLSHVNTKEAILPPFGGEFQPGLYKSVEARKFANPAPLGLSAFALTTFVLSCINMGARDITHPNIVIALAFGYGGLVQLLAGMWEMAVGNTFGATALSSYGGFWIAFAIVLTPGGFNIQTALTAENGDEAMFYNSFGLFLMGWFIFTTIMLFCTLRSTVAFFLLFLFLDLAFLLLGVGYIQRDDAGQPNPPVIKAGGFFGLLAAFAAWYNALAGIADSSNSFFIIPVAHFPWSPTGRARREKTERETV</sequence>
<gene>
    <name evidence="7" type="primary">acpA</name>
    <name evidence="8" type="ORF">AN5226.2</name>
</gene>
<comment type="function">
    <text evidence="5 6">High affinity monocarboxylate transporter (MCT) involved in acetate uptake. Unlike other activities involved in acetate utilization, acpA is dispensable for growth on the acetate precursor ethanol.</text>
</comment>
<comment type="subcellular location">
    <subcellularLocation>
        <location evidence="1">Cell membrane</location>
        <topology evidence="2">Multi-pass membrane protein</topology>
    </subcellularLocation>
    <subcellularLocation>
        <location evidence="1">Vacuole membrane</location>
        <topology evidence="2">Multi-pass membrane protein</topology>
    </subcellularLocation>
</comment>
<comment type="induction">
    <text evidence="4 5">Expression is induced by ethanol and ethyl acetate and is mediated by the specific transcriptional activator of genes of the acetate utilization pathway facB. Expression is also induced by low concentrations of acetate or propionate and under the controle of the facB transcription activator.</text>
</comment>
<comment type="disruption phenotype">
    <text evidence="5">Leads to reduced growth when acetate is used as sole carbon source at low concentration and in a high pH medium.</text>
</comment>
<comment type="similarity">
    <text evidence="9">Belongs to the acetate uptake transporter (AceTr) (TC 2.A.96) family.</text>
</comment>
<organism>
    <name type="scientific">Emericella nidulans (strain FGSC A4 / ATCC 38163 / CBS 112.46 / NRRL 194 / M139)</name>
    <name type="common">Aspergillus nidulans</name>
    <dbReference type="NCBI Taxonomy" id="227321"/>
    <lineage>
        <taxon>Eukaryota</taxon>
        <taxon>Fungi</taxon>
        <taxon>Dikarya</taxon>
        <taxon>Ascomycota</taxon>
        <taxon>Pezizomycotina</taxon>
        <taxon>Eurotiomycetes</taxon>
        <taxon>Eurotiomycetidae</taxon>
        <taxon>Eurotiales</taxon>
        <taxon>Aspergillaceae</taxon>
        <taxon>Aspergillus</taxon>
        <taxon>Aspergillus subgen. Nidulantes</taxon>
    </lineage>
</organism>
<proteinExistence type="evidence at transcript level"/>
<evidence type="ECO:0000250" key="1">
    <source>
        <dbReference type="UniProtKB" id="P25613"/>
    </source>
</evidence>
<evidence type="ECO:0000255" key="2"/>
<evidence type="ECO:0000256" key="3">
    <source>
        <dbReference type="SAM" id="MobiDB-lite"/>
    </source>
</evidence>
<evidence type="ECO:0000269" key="4">
    <source>
    </source>
</evidence>
<evidence type="ECO:0000269" key="5">
    <source>
    </source>
</evidence>
<evidence type="ECO:0000303" key="6">
    <source>
    </source>
</evidence>
<evidence type="ECO:0000303" key="7">
    <source>
    </source>
</evidence>
<evidence type="ECO:0000303" key="8">
    <source>
    </source>
</evidence>
<evidence type="ECO:0000305" key="9"/>
<accession>Q5B2K4</accession>
<accession>C8VFA3</accession>
<dbReference type="EMBL" id="BN001305">
    <property type="protein sequence ID" value="CBF81120.1"/>
    <property type="molecule type" value="Genomic_DNA"/>
</dbReference>
<dbReference type="EMBL" id="AACD01000089">
    <property type="protein sequence ID" value="EAA62407.1"/>
    <property type="molecule type" value="Genomic_DNA"/>
</dbReference>
<dbReference type="RefSeq" id="XP_662830.1">
    <property type="nucleotide sequence ID" value="XM_657738.1"/>
</dbReference>
<dbReference type="SMR" id="Q5B2K4"/>
<dbReference type="FunCoup" id="Q5B2K4">
    <property type="interactions" value="29"/>
</dbReference>
<dbReference type="STRING" id="227321.Q5B2K4"/>
<dbReference type="TCDB" id="2.A.96.1.3">
    <property type="family name" value="the acetate uptake transporter (acetr) family"/>
</dbReference>
<dbReference type="EnsemblFungi" id="CBF81120">
    <property type="protein sequence ID" value="CBF81120"/>
    <property type="gene ID" value="ANIA_05226"/>
</dbReference>
<dbReference type="GeneID" id="2871510"/>
<dbReference type="KEGG" id="ani:ANIA_05226"/>
<dbReference type="VEuPathDB" id="FungiDB:AN5226"/>
<dbReference type="eggNOG" id="ENOG502QUJS">
    <property type="taxonomic scope" value="Eukaryota"/>
</dbReference>
<dbReference type="HOGENOM" id="CLU_051062_0_1_1"/>
<dbReference type="InParanoid" id="Q5B2K4"/>
<dbReference type="OMA" id="WKKGNTF"/>
<dbReference type="OrthoDB" id="3648309at2759"/>
<dbReference type="Proteomes" id="UP000000560">
    <property type="component" value="Chromosome V"/>
</dbReference>
<dbReference type="GO" id="GO:0005886">
    <property type="term" value="C:plasma membrane"/>
    <property type="evidence" value="ECO:0000318"/>
    <property type="project" value="GO_Central"/>
</dbReference>
<dbReference type="GO" id="GO:0005774">
    <property type="term" value="C:vacuolar membrane"/>
    <property type="evidence" value="ECO:0007669"/>
    <property type="project" value="UniProtKB-SubCell"/>
</dbReference>
<dbReference type="GO" id="GO:0015123">
    <property type="term" value="F:acetate transmembrane transporter activity"/>
    <property type="evidence" value="ECO:0000315"/>
    <property type="project" value="AspGD"/>
</dbReference>
<dbReference type="GO" id="GO:0006068">
    <property type="term" value="P:ethanol catabolic process"/>
    <property type="evidence" value="ECO:0000270"/>
    <property type="project" value="AspGD"/>
</dbReference>
<dbReference type="GO" id="GO:0006811">
    <property type="term" value="P:monoatomic ion transport"/>
    <property type="evidence" value="ECO:0007669"/>
    <property type="project" value="UniProtKB-KW"/>
</dbReference>
<dbReference type="GO" id="GO:0006847">
    <property type="term" value="P:plasma membrane acetate transport"/>
    <property type="evidence" value="ECO:0000315"/>
    <property type="project" value="AspGD"/>
</dbReference>
<dbReference type="InterPro" id="IPR051633">
    <property type="entry name" value="AceTr"/>
</dbReference>
<dbReference type="InterPro" id="IPR000791">
    <property type="entry name" value="Gpr1/Fun34/SatP-like"/>
</dbReference>
<dbReference type="InterPro" id="IPR047622">
    <property type="entry name" value="GPR1_FUN34_YAAH"/>
</dbReference>
<dbReference type="NCBIfam" id="NF038013">
    <property type="entry name" value="AceTr_1"/>
    <property type="match status" value="1"/>
</dbReference>
<dbReference type="PANTHER" id="PTHR31123">
    <property type="entry name" value="ACCUMULATION OF DYADS PROTEIN 2-RELATED"/>
    <property type="match status" value="1"/>
</dbReference>
<dbReference type="PANTHER" id="PTHR31123:SF1">
    <property type="entry name" value="ACCUMULATION OF DYADS PROTEIN 2-RELATED"/>
    <property type="match status" value="1"/>
</dbReference>
<dbReference type="Pfam" id="PF01184">
    <property type="entry name" value="Gpr1_Fun34_YaaH"/>
    <property type="match status" value="1"/>
</dbReference>
<dbReference type="PROSITE" id="PS01114">
    <property type="entry name" value="GPR1_FUN34_YAAH"/>
    <property type="match status" value="1"/>
</dbReference>
<keyword id="KW-1003">Cell membrane</keyword>
<keyword id="KW-0406">Ion transport</keyword>
<keyword id="KW-0472">Membrane</keyword>
<keyword id="KW-1185">Reference proteome</keyword>
<keyword id="KW-0812">Transmembrane</keyword>
<keyword id="KW-1133">Transmembrane helix</keyword>
<keyword id="KW-0813">Transport</keyword>
<keyword id="KW-0926">Vacuole</keyword>
<name>ACPA_EMENI</name>
<feature type="chain" id="PRO_0000430707" description="Acetate permease A">
    <location>
        <begin position="1"/>
        <end position="298"/>
    </location>
</feature>
<feature type="transmembrane region" description="Helical; Name=1" evidence="2">
    <location>
        <begin position="86"/>
        <end position="106"/>
    </location>
</feature>
<feature type="transmembrane region" description="Helical; Name=2" evidence="2">
    <location>
        <begin position="115"/>
        <end position="135"/>
    </location>
</feature>
<feature type="transmembrane region" description="Helical; Name=3" evidence="2">
    <location>
        <begin position="146"/>
        <end position="166"/>
    </location>
</feature>
<feature type="transmembrane region" description="Helical; Name=4" evidence="2">
    <location>
        <begin position="185"/>
        <end position="205"/>
    </location>
</feature>
<feature type="transmembrane region" description="Helical; Name=5" evidence="2">
    <location>
        <begin position="210"/>
        <end position="230"/>
    </location>
</feature>
<feature type="transmembrane region" description="Helical; Name=6" evidence="2">
    <location>
        <begin position="245"/>
        <end position="265"/>
    </location>
</feature>
<feature type="region of interest" description="Disordered" evidence="3">
    <location>
        <begin position="1"/>
        <end position="43"/>
    </location>
</feature>
<feature type="compositionally biased region" description="Low complexity" evidence="3">
    <location>
        <begin position="14"/>
        <end position="37"/>
    </location>
</feature>